<proteinExistence type="inferred from homology"/>
<gene>
    <name evidence="1" type="primary">metK</name>
    <name type="ordered locus">Chy400_3266</name>
</gene>
<sequence>MANTFMNSPRFYFTSESVSEGHPDKMCDQISDAILDAFLSHDPKARVAVETATTTGLIVVLGEVTYERGYIPIEEIVRRTVKEIGYTSAEYGFDADTCGVMVAIHGQSPDIAMGVDKALEAKIGAMADDVEAVGAGDQGMMFGFACDETPELMPASIALAHRLIRRLERVRKDGTLPYLRPDAKSQVTVEYSFGKPVRVDTVLISSQHAPDITQDQIRADLIEHVIKTEIPEAWLDSQTKIFINPTGRFVIGGPMGDSGLTGRKIIVDTYGGVARHGGGAFSGKDPSKVDRSAAYACRWVAKNIVAAGLARRVELQVSYAIGVARPLSLSVETFGTAAVPDEVILKAVNEVFDLRPGAIIRDLDLRRPIYRKTAAGGHFGRTDIDLPWERTNRVEELRRAAGL</sequence>
<name>METK_CHLSY</name>
<dbReference type="EC" id="2.5.1.6" evidence="1"/>
<dbReference type="EMBL" id="CP001364">
    <property type="protein sequence ID" value="ACM54644.1"/>
    <property type="molecule type" value="Genomic_DNA"/>
</dbReference>
<dbReference type="SMR" id="B9LBJ9"/>
<dbReference type="KEGG" id="chl:Chy400_3266"/>
<dbReference type="HOGENOM" id="CLU_041802_1_1_0"/>
<dbReference type="OrthoDB" id="9801686at2"/>
<dbReference type="UniPathway" id="UPA00315">
    <property type="reaction ID" value="UER00080"/>
</dbReference>
<dbReference type="GO" id="GO:0005737">
    <property type="term" value="C:cytoplasm"/>
    <property type="evidence" value="ECO:0007669"/>
    <property type="project" value="UniProtKB-SubCell"/>
</dbReference>
<dbReference type="GO" id="GO:0005524">
    <property type="term" value="F:ATP binding"/>
    <property type="evidence" value="ECO:0007669"/>
    <property type="project" value="UniProtKB-UniRule"/>
</dbReference>
<dbReference type="GO" id="GO:0000287">
    <property type="term" value="F:magnesium ion binding"/>
    <property type="evidence" value="ECO:0007669"/>
    <property type="project" value="UniProtKB-UniRule"/>
</dbReference>
<dbReference type="GO" id="GO:0004478">
    <property type="term" value="F:methionine adenosyltransferase activity"/>
    <property type="evidence" value="ECO:0007669"/>
    <property type="project" value="UniProtKB-UniRule"/>
</dbReference>
<dbReference type="GO" id="GO:0006730">
    <property type="term" value="P:one-carbon metabolic process"/>
    <property type="evidence" value="ECO:0007669"/>
    <property type="project" value="UniProtKB-KW"/>
</dbReference>
<dbReference type="GO" id="GO:0006556">
    <property type="term" value="P:S-adenosylmethionine biosynthetic process"/>
    <property type="evidence" value="ECO:0007669"/>
    <property type="project" value="UniProtKB-UniRule"/>
</dbReference>
<dbReference type="CDD" id="cd18079">
    <property type="entry name" value="S-AdoMet_synt"/>
    <property type="match status" value="1"/>
</dbReference>
<dbReference type="FunFam" id="3.30.300.10:FF:000003">
    <property type="entry name" value="S-adenosylmethionine synthase"/>
    <property type="match status" value="1"/>
</dbReference>
<dbReference type="FunFam" id="3.30.300.10:FF:000004">
    <property type="entry name" value="S-adenosylmethionine synthase"/>
    <property type="match status" value="1"/>
</dbReference>
<dbReference type="Gene3D" id="3.30.300.10">
    <property type="match status" value="3"/>
</dbReference>
<dbReference type="HAMAP" id="MF_00086">
    <property type="entry name" value="S_AdoMet_synth1"/>
    <property type="match status" value="1"/>
</dbReference>
<dbReference type="InterPro" id="IPR022631">
    <property type="entry name" value="ADOMET_SYNTHASE_CS"/>
</dbReference>
<dbReference type="InterPro" id="IPR022630">
    <property type="entry name" value="S-AdoMet_synt_C"/>
</dbReference>
<dbReference type="InterPro" id="IPR022629">
    <property type="entry name" value="S-AdoMet_synt_central"/>
</dbReference>
<dbReference type="InterPro" id="IPR022628">
    <property type="entry name" value="S-AdoMet_synt_N"/>
</dbReference>
<dbReference type="InterPro" id="IPR002133">
    <property type="entry name" value="S-AdoMet_synthetase"/>
</dbReference>
<dbReference type="InterPro" id="IPR022636">
    <property type="entry name" value="S-AdoMet_synthetase_sfam"/>
</dbReference>
<dbReference type="NCBIfam" id="TIGR01034">
    <property type="entry name" value="metK"/>
    <property type="match status" value="1"/>
</dbReference>
<dbReference type="PANTHER" id="PTHR11964">
    <property type="entry name" value="S-ADENOSYLMETHIONINE SYNTHETASE"/>
    <property type="match status" value="1"/>
</dbReference>
<dbReference type="Pfam" id="PF02773">
    <property type="entry name" value="S-AdoMet_synt_C"/>
    <property type="match status" value="1"/>
</dbReference>
<dbReference type="Pfam" id="PF02772">
    <property type="entry name" value="S-AdoMet_synt_M"/>
    <property type="match status" value="1"/>
</dbReference>
<dbReference type="Pfam" id="PF00438">
    <property type="entry name" value="S-AdoMet_synt_N"/>
    <property type="match status" value="1"/>
</dbReference>
<dbReference type="PIRSF" id="PIRSF000497">
    <property type="entry name" value="MAT"/>
    <property type="match status" value="1"/>
</dbReference>
<dbReference type="SUPFAM" id="SSF55973">
    <property type="entry name" value="S-adenosylmethionine synthetase"/>
    <property type="match status" value="3"/>
</dbReference>
<dbReference type="PROSITE" id="PS00376">
    <property type="entry name" value="ADOMET_SYNTHASE_1"/>
    <property type="match status" value="1"/>
</dbReference>
<dbReference type="PROSITE" id="PS00377">
    <property type="entry name" value="ADOMET_SYNTHASE_2"/>
    <property type="match status" value="1"/>
</dbReference>
<feature type="chain" id="PRO_1000196696" description="S-adenosylmethionine synthase">
    <location>
        <begin position="1"/>
        <end position="403"/>
    </location>
</feature>
<feature type="region of interest" description="Flexible loop" evidence="1">
    <location>
        <begin position="107"/>
        <end position="117"/>
    </location>
</feature>
<feature type="binding site" description="in other chain" evidence="1">
    <location>
        <position position="22"/>
    </location>
    <ligand>
        <name>ATP</name>
        <dbReference type="ChEBI" id="CHEBI:30616"/>
        <note>ligand shared between two neighboring subunits</note>
    </ligand>
</feature>
<feature type="binding site" evidence="1">
    <location>
        <position position="24"/>
    </location>
    <ligand>
        <name>Mg(2+)</name>
        <dbReference type="ChEBI" id="CHEBI:18420"/>
    </ligand>
</feature>
<feature type="binding site" evidence="1">
    <location>
        <position position="50"/>
    </location>
    <ligand>
        <name>K(+)</name>
        <dbReference type="ChEBI" id="CHEBI:29103"/>
    </ligand>
</feature>
<feature type="binding site" description="in other chain" evidence="1">
    <location>
        <position position="63"/>
    </location>
    <ligand>
        <name>L-methionine</name>
        <dbReference type="ChEBI" id="CHEBI:57844"/>
        <note>ligand shared between two neighboring subunits</note>
    </ligand>
</feature>
<feature type="binding site" description="in other chain" evidence="1">
    <location>
        <position position="107"/>
    </location>
    <ligand>
        <name>L-methionine</name>
        <dbReference type="ChEBI" id="CHEBI:57844"/>
        <note>ligand shared between two neighboring subunits</note>
    </ligand>
</feature>
<feature type="binding site" description="in other chain" evidence="1">
    <location>
        <begin position="182"/>
        <end position="184"/>
    </location>
    <ligand>
        <name>ATP</name>
        <dbReference type="ChEBI" id="CHEBI:30616"/>
        <note>ligand shared between two neighboring subunits</note>
    </ligand>
</feature>
<feature type="binding site" description="in other chain" evidence="1">
    <location>
        <begin position="248"/>
        <end position="249"/>
    </location>
    <ligand>
        <name>ATP</name>
        <dbReference type="ChEBI" id="CHEBI:30616"/>
        <note>ligand shared between two neighboring subunits</note>
    </ligand>
</feature>
<feature type="binding site" evidence="1">
    <location>
        <position position="257"/>
    </location>
    <ligand>
        <name>ATP</name>
        <dbReference type="ChEBI" id="CHEBI:30616"/>
        <note>ligand shared between two neighboring subunits</note>
    </ligand>
</feature>
<feature type="binding site" evidence="1">
    <location>
        <position position="257"/>
    </location>
    <ligand>
        <name>L-methionine</name>
        <dbReference type="ChEBI" id="CHEBI:57844"/>
        <note>ligand shared between two neighboring subunits</note>
    </ligand>
</feature>
<feature type="binding site" description="in other chain" evidence="1">
    <location>
        <begin position="263"/>
        <end position="264"/>
    </location>
    <ligand>
        <name>ATP</name>
        <dbReference type="ChEBI" id="CHEBI:30616"/>
        <note>ligand shared between two neighboring subunits</note>
    </ligand>
</feature>
<feature type="binding site" evidence="1">
    <location>
        <position position="280"/>
    </location>
    <ligand>
        <name>ATP</name>
        <dbReference type="ChEBI" id="CHEBI:30616"/>
        <note>ligand shared between two neighboring subunits</note>
    </ligand>
</feature>
<feature type="binding site" evidence="1">
    <location>
        <position position="284"/>
    </location>
    <ligand>
        <name>ATP</name>
        <dbReference type="ChEBI" id="CHEBI:30616"/>
        <note>ligand shared between two neighboring subunits</note>
    </ligand>
</feature>
<feature type="binding site" description="in other chain" evidence="1">
    <location>
        <position position="288"/>
    </location>
    <ligand>
        <name>L-methionine</name>
        <dbReference type="ChEBI" id="CHEBI:57844"/>
        <note>ligand shared between two neighboring subunits</note>
    </ligand>
</feature>
<keyword id="KW-0067">ATP-binding</keyword>
<keyword id="KW-0963">Cytoplasm</keyword>
<keyword id="KW-0460">Magnesium</keyword>
<keyword id="KW-0479">Metal-binding</keyword>
<keyword id="KW-0547">Nucleotide-binding</keyword>
<keyword id="KW-0554">One-carbon metabolism</keyword>
<keyword id="KW-0630">Potassium</keyword>
<keyword id="KW-0808">Transferase</keyword>
<reference key="1">
    <citation type="submission" date="2009-01" db="EMBL/GenBank/DDBJ databases">
        <title>Complete sequence of Chloroflexus sp. Y-400-fl.</title>
        <authorList>
            <consortium name="US DOE Joint Genome Institute"/>
            <person name="Lucas S."/>
            <person name="Copeland A."/>
            <person name="Lapidus A."/>
            <person name="Glavina del Rio T."/>
            <person name="Dalin E."/>
            <person name="Tice H."/>
            <person name="Bruce D."/>
            <person name="Goodwin L."/>
            <person name="Pitluck S."/>
            <person name="Sims D."/>
            <person name="Kiss H."/>
            <person name="Brettin T."/>
            <person name="Detter J.C."/>
            <person name="Han C."/>
            <person name="Larimer F."/>
            <person name="Land M."/>
            <person name="Hauser L."/>
            <person name="Kyrpides N."/>
            <person name="Ovchinnikova G."/>
            <person name="Bryant D.A."/>
            <person name="Richardson P."/>
        </authorList>
    </citation>
    <scope>NUCLEOTIDE SEQUENCE [LARGE SCALE GENOMIC DNA]</scope>
    <source>
        <strain>ATCC 29364 / DSM 637 / Y-400-fl</strain>
    </source>
</reference>
<organism>
    <name type="scientific">Chloroflexus aurantiacus (strain ATCC 29364 / DSM 637 / Y-400-fl)</name>
    <dbReference type="NCBI Taxonomy" id="480224"/>
    <lineage>
        <taxon>Bacteria</taxon>
        <taxon>Bacillati</taxon>
        <taxon>Chloroflexota</taxon>
        <taxon>Chloroflexia</taxon>
        <taxon>Chloroflexales</taxon>
        <taxon>Chloroflexineae</taxon>
        <taxon>Chloroflexaceae</taxon>
        <taxon>Chloroflexus</taxon>
    </lineage>
</organism>
<comment type="function">
    <text evidence="1">Catalyzes the formation of S-adenosylmethionine (AdoMet) from methionine and ATP. The overall synthetic reaction is composed of two sequential steps, AdoMet formation and the subsequent tripolyphosphate hydrolysis which occurs prior to release of AdoMet from the enzyme.</text>
</comment>
<comment type="catalytic activity">
    <reaction evidence="1">
        <text>L-methionine + ATP + H2O = S-adenosyl-L-methionine + phosphate + diphosphate</text>
        <dbReference type="Rhea" id="RHEA:21080"/>
        <dbReference type="ChEBI" id="CHEBI:15377"/>
        <dbReference type="ChEBI" id="CHEBI:30616"/>
        <dbReference type="ChEBI" id="CHEBI:33019"/>
        <dbReference type="ChEBI" id="CHEBI:43474"/>
        <dbReference type="ChEBI" id="CHEBI:57844"/>
        <dbReference type="ChEBI" id="CHEBI:59789"/>
        <dbReference type="EC" id="2.5.1.6"/>
    </reaction>
</comment>
<comment type="cofactor">
    <cofactor evidence="1">
        <name>Mg(2+)</name>
        <dbReference type="ChEBI" id="CHEBI:18420"/>
    </cofactor>
    <text evidence="1">Binds 2 divalent ions per subunit.</text>
</comment>
<comment type="cofactor">
    <cofactor evidence="1">
        <name>K(+)</name>
        <dbReference type="ChEBI" id="CHEBI:29103"/>
    </cofactor>
    <text evidence="1">Binds 1 potassium ion per subunit.</text>
</comment>
<comment type="pathway">
    <text evidence="1">Amino-acid biosynthesis; S-adenosyl-L-methionine biosynthesis; S-adenosyl-L-methionine from L-methionine: step 1/1.</text>
</comment>
<comment type="subunit">
    <text evidence="1">Homotetramer; dimer of dimers.</text>
</comment>
<comment type="subcellular location">
    <subcellularLocation>
        <location evidence="1">Cytoplasm</location>
    </subcellularLocation>
</comment>
<comment type="similarity">
    <text evidence="1">Belongs to the AdoMet synthase family.</text>
</comment>
<evidence type="ECO:0000255" key="1">
    <source>
        <dbReference type="HAMAP-Rule" id="MF_00086"/>
    </source>
</evidence>
<accession>B9LBJ9</accession>
<protein>
    <recommendedName>
        <fullName evidence="1">S-adenosylmethionine synthase</fullName>
        <shortName evidence="1">AdoMet synthase</shortName>
        <ecNumber evidence="1">2.5.1.6</ecNumber>
    </recommendedName>
    <alternativeName>
        <fullName evidence="1">MAT</fullName>
    </alternativeName>
    <alternativeName>
        <fullName evidence="1">Methionine adenosyltransferase</fullName>
    </alternativeName>
</protein>